<dbReference type="EMBL" id="X15901">
    <property type="protein sequence ID" value="CAA34014.1"/>
    <property type="molecule type" value="Genomic_DNA"/>
</dbReference>
<dbReference type="EMBL" id="AY522330">
    <property type="protein sequence ID" value="AAS46109.1"/>
    <property type="molecule type" value="Genomic_DNA"/>
</dbReference>
<dbReference type="PIR" id="JQ0207">
    <property type="entry name" value="F2RZ44"/>
</dbReference>
<dbReference type="RefSeq" id="NP_039367.1">
    <property type="nucleotide sequence ID" value="NC_001320.1"/>
</dbReference>
<dbReference type="SMR" id="P0C367"/>
<dbReference type="FunCoup" id="P0C367">
    <property type="interactions" value="412"/>
</dbReference>
<dbReference type="STRING" id="39947.P0C367"/>
<dbReference type="PaxDb" id="39947-P0C367"/>
<dbReference type="EnsemblPlants" id="transcript-psbC">
    <property type="protein sequence ID" value="cds-CAA34014.1"/>
    <property type="gene ID" value="gene-psbC"/>
</dbReference>
<dbReference type="GeneID" id="3131411"/>
<dbReference type="Gramene" id="transcript-psbC">
    <property type="protein sequence ID" value="cds-CAA34014.1"/>
    <property type="gene ID" value="gene-psbC"/>
</dbReference>
<dbReference type="KEGG" id="dosa:psbC"/>
<dbReference type="KEGG" id="osa:3131411"/>
<dbReference type="InParanoid" id="P0C367"/>
<dbReference type="OrthoDB" id="634232at2759"/>
<dbReference type="Proteomes" id="UP000059680">
    <property type="component" value="Chloroplast"/>
</dbReference>
<dbReference type="GO" id="GO:0009535">
    <property type="term" value="C:chloroplast thylakoid membrane"/>
    <property type="evidence" value="ECO:0007669"/>
    <property type="project" value="UniProtKB-SubCell"/>
</dbReference>
<dbReference type="GO" id="GO:0009523">
    <property type="term" value="C:photosystem II"/>
    <property type="evidence" value="ECO:0007669"/>
    <property type="project" value="UniProtKB-KW"/>
</dbReference>
<dbReference type="GO" id="GO:0009536">
    <property type="term" value="C:plastid"/>
    <property type="evidence" value="ECO:0000305"/>
    <property type="project" value="Gramene"/>
</dbReference>
<dbReference type="GO" id="GO:0016168">
    <property type="term" value="F:chlorophyll binding"/>
    <property type="evidence" value="ECO:0007669"/>
    <property type="project" value="UniProtKB-UniRule"/>
</dbReference>
<dbReference type="GO" id="GO:0045156">
    <property type="term" value="F:electron transporter, transferring electrons within the cyclic electron transport pathway of photosynthesis activity"/>
    <property type="evidence" value="ECO:0007669"/>
    <property type="project" value="InterPro"/>
</dbReference>
<dbReference type="GO" id="GO:0046872">
    <property type="term" value="F:metal ion binding"/>
    <property type="evidence" value="ECO:0007669"/>
    <property type="project" value="UniProtKB-KW"/>
</dbReference>
<dbReference type="GO" id="GO:0009772">
    <property type="term" value="P:photosynthetic electron transport in photosystem II"/>
    <property type="evidence" value="ECO:0007669"/>
    <property type="project" value="InterPro"/>
</dbReference>
<dbReference type="FunFam" id="1.10.10.670:FF:000001">
    <property type="entry name" value="Photosystem II CP43 reaction center protein"/>
    <property type="match status" value="1"/>
</dbReference>
<dbReference type="Gene3D" id="1.10.10.670">
    <property type="entry name" value="photosystem ii from thermosynechococcus elongatus"/>
    <property type="match status" value="1"/>
</dbReference>
<dbReference type="HAMAP" id="MF_01496">
    <property type="entry name" value="PSII_PsbC_CP43"/>
    <property type="match status" value="1"/>
</dbReference>
<dbReference type="InterPro" id="IPR000932">
    <property type="entry name" value="PS_antenna-like"/>
</dbReference>
<dbReference type="InterPro" id="IPR036001">
    <property type="entry name" value="PS_II_antenna-like_sf"/>
</dbReference>
<dbReference type="InterPro" id="IPR005869">
    <property type="entry name" value="PSII_PsbC"/>
</dbReference>
<dbReference type="InterPro" id="IPR044900">
    <property type="entry name" value="PSII_PsbC_sf"/>
</dbReference>
<dbReference type="NCBIfam" id="TIGR01153">
    <property type="entry name" value="psbC"/>
    <property type="match status" value="1"/>
</dbReference>
<dbReference type="Pfam" id="PF00421">
    <property type="entry name" value="PSII"/>
    <property type="match status" value="1"/>
</dbReference>
<dbReference type="SUPFAM" id="SSF161077">
    <property type="entry name" value="Photosystem II antenna protein-like"/>
    <property type="match status" value="1"/>
</dbReference>
<protein>
    <recommendedName>
        <fullName evidence="1">Photosystem II CP43 reaction center protein</fullName>
    </recommendedName>
    <alternativeName>
        <fullName evidence="1">PSII 43 kDa protein</fullName>
    </alternativeName>
    <alternativeName>
        <fullName evidence="1">Protein CP-43</fullName>
    </alternativeName>
</protein>
<geneLocation type="chloroplast"/>
<name>PSBC_ORYSJ</name>
<comment type="function">
    <text evidence="1">One of the components of the core complex of photosystem II (PSII). It binds chlorophyll and helps catalyze the primary light-induced photochemical processes of PSII. PSII is a light-driven water:plastoquinone oxidoreductase, using light energy to abstract electrons from H(2)O, generating O(2) and a proton gradient subsequently used for ATP formation.</text>
</comment>
<comment type="cofactor">
    <text evidence="1">Binds multiple chlorophylls and provides some of the ligands for the Ca-4Mn-5O cluster of the oxygen-evolving complex. It may also provide a ligand for a Cl- that is required for oxygen evolution. PSII binds additional chlorophylls, carotenoids and specific lipids.</text>
</comment>
<comment type="subunit">
    <text evidence="1">PSII is composed of 1 copy each of membrane proteins PsbA, PsbB, PsbC, PsbD, PsbE, PsbF, PsbH, PsbI, PsbJ, PsbK, PsbL, PsbM, PsbT, PsbX, PsbY, PsbZ, Psb30/Ycf12, at least 3 peripheral proteins of the oxygen-evolving complex and a large number of cofactors. It forms dimeric complexes.</text>
</comment>
<comment type="subcellular location">
    <subcellularLocation>
        <location evidence="1">Plastid</location>
        <location evidence="1">Chloroplast thylakoid membrane</location>
        <topology evidence="1">Multi-pass membrane protein</topology>
    </subcellularLocation>
</comment>
<comment type="similarity">
    <text evidence="1">Belongs to the PsbB/PsbC family. PsbC subfamily.</text>
</comment>
<organism>
    <name type="scientific">Oryza sativa subsp. japonica</name>
    <name type="common">Rice</name>
    <dbReference type="NCBI Taxonomy" id="39947"/>
    <lineage>
        <taxon>Eukaryota</taxon>
        <taxon>Viridiplantae</taxon>
        <taxon>Streptophyta</taxon>
        <taxon>Embryophyta</taxon>
        <taxon>Tracheophyta</taxon>
        <taxon>Spermatophyta</taxon>
        <taxon>Magnoliopsida</taxon>
        <taxon>Liliopsida</taxon>
        <taxon>Poales</taxon>
        <taxon>Poaceae</taxon>
        <taxon>BOP clade</taxon>
        <taxon>Oryzoideae</taxon>
        <taxon>Oryzeae</taxon>
        <taxon>Oryzinae</taxon>
        <taxon>Oryza</taxon>
        <taxon>Oryza sativa</taxon>
    </lineage>
</organism>
<keyword id="KW-0007">Acetylation</keyword>
<keyword id="KW-0148">Chlorophyll</keyword>
<keyword id="KW-0150">Chloroplast</keyword>
<keyword id="KW-0157">Chromophore</keyword>
<keyword id="KW-0464">Manganese</keyword>
<keyword id="KW-0472">Membrane</keyword>
<keyword id="KW-0479">Metal-binding</keyword>
<keyword id="KW-0597">Phosphoprotein</keyword>
<keyword id="KW-0602">Photosynthesis</keyword>
<keyword id="KW-0604">Photosystem II</keyword>
<keyword id="KW-0934">Plastid</keyword>
<keyword id="KW-1185">Reference proteome</keyword>
<keyword id="KW-0793">Thylakoid</keyword>
<keyword id="KW-0812">Transmembrane</keyword>
<keyword id="KW-1133">Transmembrane helix</keyword>
<proteinExistence type="inferred from homology"/>
<evidence type="ECO:0000255" key="1">
    <source>
        <dbReference type="HAMAP-Rule" id="MF_01496"/>
    </source>
</evidence>
<accession>P0C367</accession>
<accession>P12158</accession>
<accession>Q6QY22</accession>
<accession>Q6QY85</accession>
<gene>
    <name evidence="1" type="primary">psbC</name>
    <name type="ordered locus">LOC_Osp1g00180</name>
    <name type="ORF">Nip019</name>
</gene>
<feature type="propeptide" id="PRO_0000431187" evidence="1">
    <location>
        <begin position="1"/>
        <end position="14"/>
    </location>
</feature>
<feature type="chain" id="PRO_0000288995" description="Photosystem II CP43 reaction center protein" evidence="1">
    <location>
        <begin position="15"/>
        <end position="473"/>
    </location>
</feature>
<feature type="transmembrane region" description="Helical" evidence="1">
    <location>
        <begin position="69"/>
        <end position="93"/>
    </location>
</feature>
<feature type="transmembrane region" description="Helical" evidence="1">
    <location>
        <begin position="134"/>
        <end position="155"/>
    </location>
</feature>
<feature type="transmembrane region" description="Helical" evidence="1">
    <location>
        <begin position="178"/>
        <end position="200"/>
    </location>
</feature>
<feature type="transmembrane region" description="Helical" evidence="1">
    <location>
        <begin position="255"/>
        <end position="275"/>
    </location>
</feature>
<feature type="transmembrane region" description="Helical" evidence="1">
    <location>
        <begin position="291"/>
        <end position="312"/>
    </location>
</feature>
<feature type="transmembrane region" description="Helical" evidence="1">
    <location>
        <begin position="447"/>
        <end position="471"/>
    </location>
</feature>
<feature type="binding site" evidence="1">
    <location>
        <position position="367"/>
    </location>
    <ligand>
        <name>[CaMn4O5] cluster</name>
        <dbReference type="ChEBI" id="CHEBI:189552"/>
    </ligand>
</feature>
<feature type="modified residue" description="N-acetylthreonine" evidence="1">
    <location>
        <position position="15"/>
    </location>
</feature>
<feature type="modified residue" description="Phosphothreonine" evidence="1">
    <location>
        <position position="15"/>
    </location>
</feature>
<sequence>MKILYSLRRFYHVETLFNGTFVLAGRDQETTGFAWWAGNARLINLSGKLLGAHVAHAGLIVFWAGAMNLFEVAHFVPEKPMYEQGLILLPHLATLGWGVGPGGEVLDTFPYFVSGVLHLISSAVLGFGGIYHALLGPETLEESFPFFGYVWKDRNKMTTILGIHLILLGIGAFLLVLKALYFGGIYDTWAPGGGDVRKITNLTLSPGVIFGYLLKSPFGGEGWIVSVDDLEDIIGGHVWLGFICVFGGIWHILTKPFAWARRAFVWSGEAYLSYSLGALSVFGFIACCFVWFNNTAYPSEFYGPTGPEASQAQAFTFLVRDQRLGANVGSAQGPTGLGKYLMRSPTGEVIFGGETMRFWDLRAPWLEPLRGPNGLDLSRLKKDIQPWQERRSAEYMTHAPLGSLNSVGGVATEINAVNYVSPRSWLATSHFVLGFFFFVGHLWHAGRARAAAAGFEKGIDRDLEPVLYMTPLN</sequence>
<reference key="1">
    <citation type="journal article" date="1989" name="Mol. Gen. Genet.">
        <title>The complete sequence of the rice (Oryza sativa) chloroplast genome: intermolecular recombination between distinct tRNA genes accounts for a major plastid DNA inversion during the evolution of the cereals.</title>
        <authorList>
            <person name="Hiratsuka J."/>
            <person name="Shimada H."/>
            <person name="Whittier R."/>
            <person name="Ishibashi T."/>
            <person name="Sakamoto M."/>
            <person name="Mori M."/>
            <person name="Kondo C."/>
            <person name="Honji Y."/>
            <person name="Sun C.-R."/>
            <person name="Meng B.-Y."/>
            <person name="Li Y.-Q."/>
            <person name="Kanno A."/>
            <person name="Nishizawa Y."/>
            <person name="Hirai A."/>
            <person name="Shinozaki K."/>
            <person name="Sugiura M."/>
        </authorList>
    </citation>
    <scope>NUCLEOTIDE SEQUENCE [LARGE SCALE GENOMIC DNA]</scope>
    <source>
        <strain>cv. Nipponbare</strain>
    </source>
</reference>
<reference key="2">
    <citation type="journal article" date="2004" name="Plant Physiol.">
        <title>A comparison of rice chloroplast genomes.</title>
        <authorList>
            <person name="Tang J."/>
            <person name="Xia H."/>
            <person name="Cao M."/>
            <person name="Zhang X."/>
            <person name="Zeng W."/>
            <person name="Hu S."/>
            <person name="Tong W."/>
            <person name="Wang J."/>
            <person name="Wang J."/>
            <person name="Yu J."/>
            <person name="Yang H."/>
            <person name="Zhu L."/>
        </authorList>
    </citation>
    <scope>NUCLEOTIDE SEQUENCE [LARGE SCALE GENOMIC DNA]</scope>
    <source>
        <strain>cv. Nipponbare</strain>
    </source>
</reference>